<accession>A6NH57</accession>
<evidence type="ECO:0000250" key="1"/>
<evidence type="ECO:0000255" key="2"/>
<evidence type="ECO:0000305" key="3"/>
<protein>
    <recommendedName>
        <fullName>Putative ADP-ribosylation factor-like protein 5C</fullName>
    </recommendedName>
    <alternativeName>
        <fullName>ADP-ribosylation factor-like protein 12</fullName>
    </alternativeName>
</protein>
<name>ARL5C_HUMAN</name>
<sequence>MGQLIAKLMSIFGNQEHTVIIVGLDNEGKTTILYRFLTNEVVHMCPTIGSNVEEIILPKTHFFMWDIVRPEALSFIWNTYYSNTEFIILVIDSTDRDRLLTTREELYKMLAHEALQDASVLIFANKQDVKDSMRMVEISHFLTLSTIKDHSWHIQGCCALTREGLPARLQWMESQAAAN</sequence>
<organism>
    <name type="scientific">Homo sapiens</name>
    <name type="common">Human</name>
    <dbReference type="NCBI Taxonomy" id="9606"/>
    <lineage>
        <taxon>Eukaryota</taxon>
        <taxon>Metazoa</taxon>
        <taxon>Chordata</taxon>
        <taxon>Craniata</taxon>
        <taxon>Vertebrata</taxon>
        <taxon>Euteleostomi</taxon>
        <taxon>Mammalia</taxon>
        <taxon>Eutheria</taxon>
        <taxon>Euarchontoglires</taxon>
        <taxon>Primates</taxon>
        <taxon>Haplorrhini</taxon>
        <taxon>Catarrhini</taxon>
        <taxon>Hominidae</taxon>
        <taxon>Homo</taxon>
    </lineage>
</organism>
<reference key="1">
    <citation type="journal article" date="2006" name="Nature">
        <title>DNA sequence of human chromosome 17 and analysis of rearrangement in the human lineage.</title>
        <authorList>
            <person name="Zody M.C."/>
            <person name="Garber M."/>
            <person name="Adams D.J."/>
            <person name="Sharpe T."/>
            <person name="Harrow J."/>
            <person name="Lupski J.R."/>
            <person name="Nicholson C."/>
            <person name="Searle S.M."/>
            <person name="Wilming L."/>
            <person name="Young S.K."/>
            <person name="Abouelleil A."/>
            <person name="Allen N.R."/>
            <person name="Bi W."/>
            <person name="Bloom T."/>
            <person name="Borowsky M.L."/>
            <person name="Bugalter B.E."/>
            <person name="Butler J."/>
            <person name="Chang J.L."/>
            <person name="Chen C.-K."/>
            <person name="Cook A."/>
            <person name="Corum B."/>
            <person name="Cuomo C.A."/>
            <person name="de Jong P.J."/>
            <person name="DeCaprio D."/>
            <person name="Dewar K."/>
            <person name="FitzGerald M."/>
            <person name="Gilbert J."/>
            <person name="Gibson R."/>
            <person name="Gnerre S."/>
            <person name="Goldstein S."/>
            <person name="Grafham D.V."/>
            <person name="Grocock R."/>
            <person name="Hafez N."/>
            <person name="Hagopian D.S."/>
            <person name="Hart E."/>
            <person name="Norman C.H."/>
            <person name="Humphray S."/>
            <person name="Jaffe D.B."/>
            <person name="Jones M."/>
            <person name="Kamal M."/>
            <person name="Khodiyar V.K."/>
            <person name="LaButti K."/>
            <person name="Laird G."/>
            <person name="Lehoczky J."/>
            <person name="Liu X."/>
            <person name="Lokyitsang T."/>
            <person name="Loveland J."/>
            <person name="Lui A."/>
            <person name="Macdonald P."/>
            <person name="Major J.E."/>
            <person name="Matthews L."/>
            <person name="Mauceli E."/>
            <person name="McCarroll S.A."/>
            <person name="Mihalev A.H."/>
            <person name="Mudge J."/>
            <person name="Nguyen C."/>
            <person name="Nicol R."/>
            <person name="O'Leary S.B."/>
            <person name="Osoegawa K."/>
            <person name="Schwartz D.C."/>
            <person name="Shaw-Smith C."/>
            <person name="Stankiewicz P."/>
            <person name="Steward C."/>
            <person name="Swarbreck D."/>
            <person name="Venkataraman V."/>
            <person name="Whittaker C.A."/>
            <person name="Yang X."/>
            <person name="Zimmer A.R."/>
            <person name="Bradley A."/>
            <person name="Hubbard T."/>
            <person name="Birren B.W."/>
            <person name="Rogers J."/>
            <person name="Lander E.S."/>
            <person name="Nusbaum C."/>
        </authorList>
    </citation>
    <scope>NUCLEOTIDE SEQUENCE [LARGE SCALE GENOMIC DNA]</scope>
</reference>
<feature type="initiator methionine" description="Removed" evidence="2">
    <location>
        <position position="1"/>
    </location>
</feature>
<feature type="chain" id="PRO_0000332303" description="Putative ADP-ribosylation factor-like protein 5C">
    <location>
        <begin position="2"/>
        <end position="179"/>
    </location>
</feature>
<feature type="binding site" evidence="1">
    <location>
        <begin position="23"/>
        <end position="30"/>
    </location>
    <ligand>
        <name>GTP</name>
        <dbReference type="ChEBI" id="CHEBI:37565"/>
    </ligand>
</feature>
<feature type="binding site" evidence="1">
    <location>
        <begin position="66"/>
        <end position="70"/>
    </location>
    <ligand>
        <name>GTP</name>
        <dbReference type="ChEBI" id="CHEBI:37565"/>
    </ligand>
</feature>
<feature type="binding site" evidence="1">
    <location>
        <begin position="125"/>
        <end position="128"/>
    </location>
    <ligand>
        <name>GTP</name>
        <dbReference type="ChEBI" id="CHEBI:37565"/>
    </ligand>
</feature>
<feature type="lipid moiety-binding region" description="N-myristoyl glycine" evidence="2">
    <location>
        <position position="2"/>
    </location>
</feature>
<gene>
    <name type="primary">ARL5C</name>
    <name type="synonym">ARL12</name>
</gene>
<proteinExistence type="inferred from homology"/>
<dbReference type="EMBL" id="AC004408">
    <property type="status" value="NOT_ANNOTATED_CDS"/>
    <property type="molecule type" value="Genomic_DNA"/>
</dbReference>
<dbReference type="CCDS" id="CCDS45664.1"/>
<dbReference type="RefSeq" id="NP_001137440.1">
    <property type="nucleotide sequence ID" value="NM_001143968.1"/>
</dbReference>
<dbReference type="SMR" id="A6NH57"/>
<dbReference type="FunCoup" id="A6NH57">
    <property type="interactions" value="23"/>
</dbReference>
<dbReference type="STRING" id="9606.ENSP00000269586"/>
<dbReference type="iPTMnet" id="A6NH57"/>
<dbReference type="PhosphoSitePlus" id="A6NH57"/>
<dbReference type="BioMuta" id="ARL5C"/>
<dbReference type="PaxDb" id="9606-ENSP00000269586"/>
<dbReference type="Antibodypedia" id="57274">
    <property type="antibodies" value="39 antibodies from 11 providers"/>
</dbReference>
<dbReference type="DNASU" id="390790"/>
<dbReference type="Ensembl" id="ENST00000269586.12">
    <property type="protein sequence ID" value="ENSP00000269586.7"/>
    <property type="gene ID" value="ENSG00000141748.13"/>
</dbReference>
<dbReference type="GeneID" id="390790"/>
<dbReference type="KEGG" id="hsa:390790"/>
<dbReference type="MANE-Select" id="ENST00000269586.12">
    <property type="protein sequence ID" value="ENSP00000269586.7"/>
    <property type="RefSeq nucleotide sequence ID" value="NM_001143968.1"/>
    <property type="RefSeq protein sequence ID" value="NP_001137440.1"/>
</dbReference>
<dbReference type="UCSC" id="uc010wea.3">
    <property type="organism name" value="human"/>
</dbReference>
<dbReference type="AGR" id="HGNC:31111"/>
<dbReference type="CTD" id="390790"/>
<dbReference type="DisGeNET" id="390790"/>
<dbReference type="GeneCards" id="ARL5C"/>
<dbReference type="HGNC" id="HGNC:31111">
    <property type="gene designation" value="ARL5C"/>
</dbReference>
<dbReference type="HPA" id="ENSG00000141748">
    <property type="expression patterns" value="Tissue enriched (lymphoid)"/>
</dbReference>
<dbReference type="neXtProt" id="NX_A6NH57"/>
<dbReference type="PharmGKB" id="PA134964408"/>
<dbReference type="VEuPathDB" id="HostDB:ENSG00000141748"/>
<dbReference type="eggNOG" id="KOG0070">
    <property type="taxonomic scope" value="Eukaryota"/>
</dbReference>
<dbReference type="GeneTree" id="ENSGT00940000163066"/>
<dbReference type="HOGENOM" id="CLU_040729_9_1_1"/>
<dbReference type="InParanoid" id="A6NH57"/>
<dbReference type="OMA" id="WDIVRPE"/>
<dbReference type="OrthoDB" id="2011769at2759"/>
<dbReference type="PAN-GO" id="A6NH57">
    <property type="GO annotations" value="6 GO annotations based on evolutionary models"/>
</dbReference>
<dbReference type="PhylomeDB" id="A6NH57"/>
<dbReference type="TreeFam" id="TF105465"/>
<dbReference type="PathwayCommons" id="A6NH57"/>
<dbReference type="SignaLink" id="A6NH57"/>
<dbReference type="BioGRID-ORCS" id="390790">
    <property type="hits" value="13 hits in 1145 CRISPR screens"/>
</dbReference>
<dbReference type="GenomeRNAi" id="390790"/>
<dbReference type="Pharos" id="A6NH57">
    <property type="development level" value="Tdark"/>
</dbReference>
<dbReference type="PRO" id="PR:A6NH57"/>
<dbReference type="Proteomes" id="UP000005640">
    <property type="component" value="Chromosome 17"/>
</dbReference>
<dbReference type="RNAct" id="A6NH57">
    <property type="molecule type" value="protein"/>
</dbReference>
<dbReference type="Bgee" id="ENSG00000141748">
    <property type="expression patterns" value="Expressed in primordial germ cell in gonad and 90 other cell types or tissues"/>
</dbReference>
<dbReference type="ExpressionAtlas" id="A6NH57">
    <property type="expression patterns" value="baseline and differential"/>
</dbReference>
<dbReference type="GO" id="GO:0005737">
    <property type="term" value="C:cytoplasm"/>
    <property type="evidence" value="ECO:0000318"/>
    <property type="project" value="GO_Central"/>
</dbReference>
<dbReference type="GO" id="GO:0005802">
    <property type="term" value="C:trans-Golgi network"/>
    <property type="evidence" value="ECO:0000318"/>
    <property type="project" value="GO_Central"/>
</dbReference>
<dbReference type="GO" id="GO:0005525">
    <property type="term" value="F:GTP binding"/>
    <property type="evidence" value="ECO:0000318"/>
    <property type="project" value="GO_Central"/>
</dbReference>
<dbReference type="GO" id="GO:0003924">
    <property type="term" value="F:GTPase activity"/>
    <property type="evidence" value="ECO:0007669"/>
    <property type="project" value="InterPro"/>
</dbReference>
<dbReference type="GO" id="GO:0006886">
    <property type="term" value="P:intracellular protein transport"/>
    <property type="evidence" value="ECO:0000318"/>
    <property type="project" value="GO_Central"/>
</dbReference>
<dbReference type="GO" id="GO:1903292">
    <property type="term" value="P:protein localization to Golgi membrane"/>
    <property type="evidence" value="ECO:0000318"/>
    <property type="project" value="GO_Central"/>
</dbReference>
<dbReference type="GO" id="GO:0016192">
    <property type="term" value="P:vesicle-mediated transport"/>
    <property type="evidence" value="ECO:0000318"/>
    <property type="project" value="GO_Central"/>
</dbReference>
<dbReference type="FunFam" id="3.40.50.300:FF:000294">
    <property type="entry name" value="ADP-ribosylation factor-like protein 5A"/>
    <property type="match status" value="1"/>
</dbReference>
<dbReference type="Gene3D" id="3.40.50.300">
    <property type="entry name" value="P-loop containing nucleotide triphosphate hydrolases"/>
    <property type="match status" value="1"/>
</dbReference>
<dbReference type="InterPro" id="IPR027417">
    <property type="entry name" value="P-loop_NTPase"/>
</dbReference>
<dbReference type="InterPro" id="IPR005225">
    <property type="entry name" value="Small_GTP-bd"/>
</dbReference>
<dbReference type="InterPro" id="IPR024156">
    <property type="entry name" value="Small_GTPase_ARF"/>
</dbReference>
<dbReference type="InterPro" id="IPR006689">
    <property type="entry name" value="Small_GTPase_ARF/SAR"/>
</dbReference>
<dbReference type="NCBIfam" id="TIGR00231">
    <property type="entry name" value="small_GTP"/>
    <property type="match status" value="1"/>
</dbReference>
<dbReference type="PANTHER" id="PTHR11711">
    <property type="entry name" value="ADP RIBOSYLATION FACTOR-RELATED"/>
    <property type="match status" value="1"/>
</dbReference>
<dbReference type="Pfam" id="PF00025">
    <property type="entry name" value="Arf"/>
    <property type="match status" value="1"/>
</dbReference>
<dbReference type="PRINTS" id="PR00328">
    <property type="entry name" value="SAR1GTPBP"/>
</dbReference>
<dbReference type="SMART" id="SM00177">
    <property type="entry name" value="ARF"/>
    <property type="match status" value="1"/>
</dbReference>
<dbReference type="SMART" id="SM00178">
    <property type="entry name" value="SAR"/>
    <property type="match status" value="1"/>
</dbReference>
<dbReference type="SUPFAM" id="SSF52540">
    <property type="entry name" value="P-loop containing nucleoside triphosphate hydrolases"/>
    <property type="match status" value="1"/>
</dbReference>
<dbReference type="PROSITE" id="PS51417">
    <property type="entry name" value="ARF"/>
    <property type="match status" value="1"/>
</dbReference>
<keyword id="KW-0342">GTP-binding</keyword>
<keyword id="KW-0449">Lipoprotein</keyword>
<keyword id="KW-0519">Myristate</keyword>
<keyword id="KW-0547">Nucleotide-binding</keyword>
<keyword id="KW-1185">Reference proteome</keyword>
<comment type="function">
    <text evidence="1">Binds and exchanges GTP and GDP.</text>
</comment>
<comment type="similarity">
    <text evidence="3">Belongs to the small GTPase superfamily. Arf family.</text>
</comment>